<comment type="function">
    <text evidence="1">Catalyzes the NADPH-dependent rearrangement and reduction of 1-deoxy-D-xylulose-5-phosphate (DXP) to 2-C-methyl-D-erythritol 4-phosphate (MEP).</text>
</comment>
<comment type="catalytic activity">
    <reaction evidence="1">
        <text>2-C-methyl-D-erythritol 4-phosphate + NADP(+) = 1-deoxy-D-xylulose 5-phosphate + NADPH + H(+)</text>
        <dbReference type="Rhea" id="RHEA:13717"/>
        <dbReference type="ChEBI" id="CHEBI:15378"/>
        <dbReference type="ChEBI" id="CHEBI:57783"/>
        <dbReference type="ChEBI" id="CHEBI:57792"/>
        <dbReference type="ChEBI" id="CHEBI:58262"/>
        <dbReference type="ChEBI" id="CHEBI:58349"/>
        <dbReference type="EC" id="1.1.1.267"/>
    </reaction>
    <physiologicalReaction direction="right-to-left" evidence="1">
        <dbReference type="Rhea" id="RHEA:13719"/>
    </physiologicalReaction>
</comment>
<comment type="cofactor">
    <cofactor evidence="1">
        <name>Mg(2+)</name>
        <dbReference type="ChEBI" id="CHEBI:18420"/>
    </cofactor>
    <cofactor evidence="1">
        <name>Mn(2+)</name>
        <dbReference type="ChEBI" id="CHEBI:29035"/>
    </cofactor>
</comment>
<comment type="pathway">
    <text evidence="1">Isoprenoid biosynthesis; isopentenyl diphosphate biosynthesis via DXP pathway; isopentenyl diphosphate from 1-deoxy-D-xylulose 5-phosphate: step 1/6.</text>
</comment>
<comment type="similarity">
    <text evidence="1">Belongs to the DXR family.</text>
</comment>
<dbReference type="EC" id="1.1.1.267" evidence="1"/>
<dbReference type="EMBL" id="CP000510">
    <property type="protein sequence ID" value="ABM04672.1"/>
    <property type="molecule type" value="Genomic_DNA"/>
</dbReference>
<dbReference type="RefSeq" id="WP_011771226.1">
    <property type="nucleotide sequence ID" value="NC_008709.1"/>
</dbReference>
<dbReference type="SMR" id="A1SYV7"/>
<dbReference type="STRING" id="357804.Ping_2970"/>
<dbReference type="KEGG" id="pin:Ping_2970"/>
<dbReference type="eggNOG" id="COG0743">
    <property type="taxonomic scope" value="Bacteria"/>
</dbReference>
<dbReference type="HOGENOM" id="CLU_035714_4_0_6"/>
<dbReference type="OrthoDB" id="9806546at2"/>
<dbReference type="UniPathway" id="UPA00056">
    <property type="reaction ID" value="UER00092"/>
</dbReference>
<dbReference type="Proteomes" id="UP000000639">
    <property type="component" value="Chromosome"/>
</dbReference>
<dbReference type="GO" id="GO:0030604">
    <property type="term" value="F:1-deoxy-D-xylulose-5-phosphate reductoisomerase activity"/>
    <property type="evidence" value="ECO:0007669"/>
    <property type="project" value="UniProtKB-UniRule"/>
</dbReference>
<dbReference type="GO" id="GO:0030145">
    <property type="term" value="F:manganese ion binding"/>
    <property type="evidence" value="ECO:0007669"/>
    <property type="project" value="TreeGrafter"/>
</dbReference>
<dbReference type="GO" id="GO:0070402">
    <property type="term" value="F:NADPH binding"/>
    <property type="evidence" value="ECO:0007669"/>
    <property type="project" value="InterPro"/>
</dbReference>
<dbReference type="GO" id="GO:0051484">
    <property type="term" value="P:isopentenyl diphosphate biosynthetic process, methylerythritol 4-phosphate pathway involved in terpenoid biosynthetic process"/>
    <property type="evidence" value="ECO:0007669"/>
    <property type="project" value="TreeGrafter"/>
</dbReference>
<dbReference type="FunFam" id="1.10.1740.10:FF:000004">
    <property type="entry name" value="1-deoxy-D-xylulose 5-phosphate reductoisomerase"/>
    <property type="match status" value="1"/>
</dbReference>
<dbReference type="FunFam" id="3.40.50.720:FF:000045">
    <property type="entry name" value="1-deoxy-D-xylulose 5-phosphate reductoisomerase"/>
    <property type="match status" value="1"/>
</dbReference>
<dbReference type="Gene3D" id="1.10.1740.10">
    <property type="match status" value="1"/>
</dbReference>
<dbReference type="Gene3D" id="3.40.50.720">
    <property type="entry name" value="NAD(P)-binding Rossmann-like Domain"/>
    <property type="match status" value="1"/>
</dbReference>
<dbReference type="HAMAP" id="MF_00183">
    <property type="entry name" value="DXP_reductoisom"/>
    <property type="match status" value="1"/>
</dbReference>
<dbReference type="InterPro" id="IPR003821">
    <property type="entry name" value="DXP_reductoisomerase"/>
</dbReference>
<dbReference type="InterPro" id="IPR013644">
    <property type="entry name" value="DXP_reductoisomerase_C"/>
</dbReference>
<dbReference type="InterPro" id="IPR013512">
    <property type="entry name" value="DXP_reductoisomerase_N"/>
</dbReference>
<dbReference type="InterPro" id="IPR026877">
    <property type="entry name" value="DXPR_C"/>
</dbReference>
<dbReference type="InterPro" id="IPR036169">
    <property type="entry name" value="DXPR_C_sf"/>
</dbReference>
<dbReference type="InterPro" id="IPR036291">
    <property type="entry name" value="NAD(P)-bd_dom_sf"/>
</dbReference>
<dbReference type="NCBIfam" id="TIGR00243">
    <property type="entry name" value="Dxr"/>
    <property type="match status" value="1"/>
</dbReference>
<dbReference type="NCBIfam" id="NF003938">
    <property type="entry name" value="PRK05447.1-1"/>
    <property type="match status" value="1"/>
</dbReference>
<dbReference type="PANTHER" id="PTHR30525">
    <property type="entry name" value="1-DEOXY-D-XYLULOSE 5-PHOSPHATE REDUCTOISOMERASE"/>
    <property type="match status" value="1"/>
</dbReference>
<dbReference type="PANTHER" id="PTHR30525:SF0">
    <property type="entry name" value="1-DEOXY-D-XYLULOSE 5-PHOSPHATE REDUCTOISOMERASE, CHLOROPLASTIC"/>
    <property type="match status" value="1"/>
</dbReference>
<dbReference type="Pfam" id="PF08436">
    <property type="entry name" value="DXP_redisom_C"/>
    <property type="match status" value="1"/>
</dbReference>
<dbReference type="Pfam" id="PF02670">
    <property type="entry name" value="DXP_reductoisom"/>
    <property type="match status" value="1"/>
</dbReference>
<dbReference type="Pfam" id="PF13288">
    <property type="entry name" value="DXPR_C"/>
    <property type="match status" value="1"/>
</dbReference>
<dbReference type="PIRSF" id="PIRSF006205">
    <property type="entry name" value="Dxp_reductismrs"/>
    <property type="match status" value="1"/>
</dbReference>
<dbReference type="SUPFAM" id="SSF69055">
    <property type="entry name" value="1-deoxy-D-xylulose-5-phosphate reductoisomerase, C-terminal domain"/>
    <property type="match status" value="1"/>
</dbReference>
<dbReference type="SUPFAM" id="SSF55347">
    <property type="entry name" value="Glyceraldehyde-3-phosphate dehydrogenase-like, C-terminal domain"/>
    <property type="match status" value="1"/>
</dbReference>
<dbReference type="SUPFAM" id="SSF51735">
    <property type="entry name" value="NAD(P)-binding Rossmann-fold domains"/>
    <property type="match status" value="1"/>
</dbReference>
<proteinExistence type="inferred from homology"/>
<feature type="chain" id="PRO_1000020296" description="1-deoxy-D-xylulose 5-phosphate reductoisomerase">
    <location>
        <begin position="1"/>
        <end position="399"/>
    </location>
</feature>
<feature type="binding site" evidence="1">
    <location>
        <position position="10"/>
    </location>
    <ligand>
        <name>NADPH</name>
        <dbReference type="ChEBI" id="CHEBI:57783"/>
    </ligand>
</feature>
<feature type="binding site" evidence="1">
    <location>
        <position position="11"/>
    </location>
    <ligand>
        <name>NADPH</name>
        <dbReference type="ChEBI" id="CHEBI:57783"/>
    </ligand>
</feature>
<feature type="binding site" evidence="1">
    <location>
        <position position="12"/>
    </location>
    <ligand>
        <name>NADPH</name>
        <dbReference type="ChEBI" id="CHEBI:57783"/>
    </ligand>
</feature>
<feature type="binding site" evidence="1">
    <location>
        <position position="13"/>
    </location>
    <ligand>
        <name>NADPH</name>
        <dbReference type="ChEBI" id="CHEBI:57783"/>
    </ligand>
</feature>
<feature type="binding site" evidence="1">
    <location>
        <position position="124"/>
    </location>
    <ligand>
        <name>NADPH</name>
        <dbReference type="ChEBI" id="CHEBI:57783"/>
    </ligand>
</feature>
<feature type="binding site" evidence="1">
    <location>
        <position position="125"/>
    </location>
    <ligand>
        <name>1-deoxy-D-xylulose 5-phosphate</name>
        <dbReference type="ChEBI" id="CHEBI:57792"/>
    </ligand>
</feature>
<feature type="binding site" evidence="1">
    <location>
        <position position="126"/>
    </location>
    <ligand>
        <name>NADPH</name>
        <dbReference type="ChEBI" id="CHEBI:57783"/>
    </ligand>
</feature>
<feature type="binding site" evidence="1">
    <location>
        <position position="150"/>
    </location>
    <ligand>
        <name>Mn(2+)</name>
        <dbReference type="ChEBI" id="CHEBI:29035"/>
    </ligand>
</feature>
<feature type="binding site" evidence="1">
    <location>
        <position position="151"/>
    </location>
    <ligand>
        <name>1-deoxy-D-xylulose 5-phosphate</name>
        <dbReference type="ChEBI" id="CHEBI:57792"/>
    </ligand>
</feature>
<feature type="binding site" evidence="1">
    <location>
        <position position="152"/>
    </location>
    <ligand>
        <name>1-deoxy-D-xylulose 5-phosphate</name>
        <dbReference type="ChEBI" id="CHEBI:57792"/>
    </ligand>
</feature>
<feature type="binding site" evidence="1">
    <location>
        <position position="152"/>
    </location>
    <ligand>
        <name>Mn(2+)</name>
        <dbReference type="ChEBI" id="CHEBI:29035"/>
    </ligand>
</feature>
<feature type="binding site" evidence="1">
    <location>
        <position position="186"/>
    </location>
    <ligand>
        <name>1-deoxy-D-xylulose 5-phosphate</name>
        <dbReference type="ChEBI" id="CHEBI:57792"/>
    </ligand>
</feature>
<feature type="binding site" evidence="1">
    <location>
        <position position="209"/>
    </location>
    <ligand>
        <name>1-deoxy-D-xylulose 5-phosphate</name>
        <dbReference type="ChEBI" id="CHEBI:57792"/>
    </ligand>
</feature>
<feature type="binding site" evidence="1">
    <location>
        <position position="215"/>
    </location>
    <ligand>
        <name>NADPH</name>
        <dbReference type="ChEBI" id="CHEBI:57783"/>
    </ligand>
</feature>
<feature type="binding site" evidence="1">
    <location>
        <position position="222"/>
    </location>
    <ligand>
        <name>1-deoxy-D-xylulose 5-phosphate</name>
        <dbReference type="ChEBI" id="CHEBI:57792"/>
    </ligand>
</feature>
<feature type="binding site" evidence="1">
    <location>
        <position position="227"/>
    </location>
    <ligand>
        <name>1-deoxy-D-xylulose 5-phosphate</name>
        <dbReference type="ChEBI" id="CHEBI:57792"/>
    </ligand>
</feature>
<feature type="binding site" evidence="1">
    <location>
        <position position="228"/>
    </location>
    <ligand>
        <name>1-deoxy-D-xylulose 5-phosphate</name>
        <dbReference type="ChEBI" id="CHEBI:57792"/>
    </ligand>
</feature>
<feature type="binding site" evidence="1">
    <location>
        <position position="231"/>
    </location>
    <ligand>
        <name>1-deoxy-D-xylulose 5-phosphate</name>
        <dbReference type="ChEBI" id="CHEBI:57792"/>
    </ligand>
</feature>
<feature type="binding site" evidence="1">
    <location>
        <position position="231"/>
    </location>
    <ligand>
        <name>Mn(2+)</name>
        <dbReference type="ChEBI" id="CHEBI:29035"/>
    </ligand>
</feature>
<sequence length="399" mass="43383">MKKLAILGATGSIGDSTLSVCRSNPELYQITLLAASSSVDKMLALCREFTPLYVSMSSEISAKKLRGLLKRNNLSCHVLDDEQRLLELLASDHVDSVMAAIVGAAGLKTTLAAVDAGKEVFLANKEALVMSGALFIDAVKKSGAKLWPVDSEHNAIYQALSPKLQNTIGACDLSGEGVSKILLTGSGGPFLEKPLAEFAAITPAQAVKHPNWSMGKKISIDSATMMNKGLEYIEARWLFNANKEQLQIIIHPQSVIHSMVQYKDGSVIAQMGNPNMRIPIAYVLGGEQRIESGTDFLDFFAAPDFSFTAPDFDRYPCLKLAIDACFEGQQSTTILNAANEIAVEAFLNQTIKFTQISQLVERVLNQHESAAIESVEHLLEIDTEARLSASEIIKRDYLC</sequence>
<name>DXR_PSYIN</name>
<reference key="1">
    <citation type="journal article" date="2008" name="BMC Genomics">
        <title>Genomics of an extreme psychrophile, Psychromonas ingrahamii.</title>
        <authorList>
            <person name="Riley M."/>
            <person name="Staley J.T."/>
            <person name="Danchin A."/>
            <person name="Wang T.Z."/>
            <person name="Brettin T.S."/>
            <person name="Hauser L.J."/>
            <person name="Land M.L."/>
            <person name="Thompson L.S."/>
        </authorList>
    </citation>
    <scope>NUCLEOTIDE SEQUENCE [LARGE SCALE GENOMIC DNA]</scope>
    <source>
        <strain>DSM 17664 / CCUG 51855 / 37</strain>
    </source>
</reference>
<evidence type="ECO:0000255" key="1">
    <source>
        <dbReference type="HAMAP-Rule" id="MF_00183"/>
    </source>
</evidence>
<organism>
    <name type="scientific">Psychromonas ingrahamii (strain DSM 17664 / CCUG 51855 / 37)</name>
    <dbReference type="NCBI Taxonomy" id="357804"/>
    <lineage>
        <taxon>Bacteria</taxon>
        <taxon>Pseudomonadati</taxon>
        <taxon>Pseudomonadota</taxon>
        <taxon>Gammaproteobacteria</taxon>
        <taxon>Alteromonadales</taxon>
        <taxon>Psychromonadaceae</taxon>
        <taxon>Psychromonas</taxon>
    </lineage>
</organism>
<gene>
    <name evidence="1" type="primary">dxr</name>
    <name type="ordered locus">Ping_2970</name>
</gene>
<accession>A1SYV7</accession>
<keyword id="KW-0414">Isoprene biosynthesis</keyword>
<keyword id="KW-0464">Manganese</keyword>
<keyword id="KW-0479">Metal-binding</keyword>
<keyword id="KW-0521">NADP</keyword>
<keyword id="KW-0560">Oxidoreductase</keyword>
<keyword id="KW-1185">Reference proteome</keyword>
<protein>
    <recommendedName>
        <fullName evidence="1">1-deoxy-D-xylulose 5-phosphate reductoisomerase</fullName>
        <shortName evidence="1">DXP reductoisomerase</shortName>
        <ecNumber evidence="1">1.1.1.267</ecNumber>
    </recommendedName>
    <alternativeName>
        <fullName evidence="1">1-deoxyxylulose-5-phosphate reductoisomerase</fullName>
    </alternativeName>
    <alternativeName>
        <fullName evidence="1">2-C-methyl-D-erythritol 4-phosphate synthase</fullName>
    </alternativeName>
</protein>